<dbReference type="EC" id="3.6.4.13" evidence="1"/>
<dbReference type="EMBL" id="CP000753">
    <property type="protein sequence ID" value="ABS10072.1"/>
    <property type="molecule type" value="Genomic_DNA"/>
</dbReference>
<dbReference type="RefSeq" id="WP_006084377.1">
    <property type="nucleotide sequence ID" value="NC_009665.1"/>
</dbReference>
<dbReference type="SMR" id="A6WTD3"/>
<dbReference type="GeneID" id="11774065"/>
<dbReference type="KEGG" id="sbm:Shew185_3951"/>
<dbReference type="HOGENOM" id="CLU_003041_28_3_6"/>
<dbReference type="GO" id="GO:0005829">
    <property type="term" value="C:cytosol"/>
    <property type="evidence" value="ECO:0007669"/>
    <property type="project" value="TreeGrafter"/>
</dbReference>
<dbReference type="GO" id="GO:0005524">
    <property type="term" value="F:ATP binding"/>
    <property type="evidence" value="ECO:0007669"/>
    <property type="project" value="UniProtKB-UniRule"/>
</dbReference>
<dbReference type="GO" id="GO:0016887">
    <property type="term" value="F:ATP hydrolysis activity"/>
    <property type="evidence" value="ECO:0007669"/>
    <property type="project" value="RHEA"/>
</dbReference>
<dbReference type="GO" id="GO:0003723">
    <property type="term" value="F:RNA binding"/>
    <property type="evidence" value="ECO:0007669"/>
    <property type="project" value="UniProtKB-UniRule"/>
</dbReference>
<dbReference type="GO" id="GO:0003724">
    <property type="term" value="F:RNA helicase activity"/>
    <property type="evidence" value="ECO:0007669"/>
    <property type="project" value="UniProtKB-UniRule"/>
</dbReference>
<dbReference type="GO" id="GO:0006401">
    <property type="term" value="P:RNA catabolic process"/>
    <property type="evidence" value="ECO:0007669"/>
    <property type="project" value="UniProtKB-UniRule"/>
</dbReference>
<dbReference type="CDD" id="cd00268">
    <property type="entry name" value="DEADc"/>
    <property type="match status" value="1"/>
</dbReference>
<dbReference type="CDD" id="cd18787">
    <property type="entry name" value="SF2_C_DEAD"/>
    <property type="match status" value="1"/>
</dbReference>
<dbReference type="FunFam" id="3.40.50.300:FF:000008">
    <property type="entry name" value="ATP-dependent RNA helicase RhlB"/>
    <property type="match status" value="1"/>
</dbReference>
<dbReference type="FunFam" id="3.40.50.300:FF:000312">
    <property type="entry name" value="ATP-dependent RNA helicase RhlB"/>
    <property type="match status" value="1"/>
</dbReference>
<dbReference type="Gene3D" id="3.40.50.300">
    <property type="entry name" value="P-loop containing nucleotide triphosphate hydrolases"/>
    <property type="match status" value="2"/>
</dbReference>
<dbReference type="HAMAP" id="MF_00661">
    <property type="entry name" value="DEAD_helicase_RhlB"/>
    <property type="match status" value="1"/>
</dbReference>
<dbReference type="InterPro" id="IPR011545">
    <property type="entry name" value="DEAD/DEAH_box_helicase_dom"/>
</dbReference>
<dbReference type="InterPro" id="IPR050079">
    <property type="entry name" value="DEAD_box_RNA_helicase"/>
</dbReference>
<dbReference type="InterPro" id="IPR014001">
    <property type="entry name" value="Helicase_ATP-bd"/>
</dbReference>
<dbReference type="InterPro" id="IPR001650">
    <property type="entry name" value="Helicase_C-like"/>
</dbReference>
<dbReference type="InterPro" id="IPR027417">
    <property type="entry name" value="P-loop_NTPase"/>
</dbReference>
<dbReference type="InterPro" id="IPR000629">
    <property type="entry name" value="RNA-helicase_DEAD-box_CS"/>
</dbReference>
<dbReference type="InterPro" id="IPR023554">
    <property type="entry name" value="RNA_helicase_ATP-dep_RhlB"/>
</dbReference>
<dbReference type="InterPro" id="IPR014014">
    <property type="entry name" value="RNA_helicase_DEAD_Q_motif"/>
</dbReference>
<dbReference type="NCBIfam" id="NF003419">
    <property type="entry name" value="PRK04837.1"/>
    <property type="match status" value="1"/>
</dbReference>
<dbReference type="PANTHER" id="PTHR47959:SF10">
    <property type="entry name" value="ATP-DEPENDENT RNA HELICASE RHLB"/>
    <property type="match status" value="1"/>
</dbReference>
<dbReference type="PANTHER" id="PTHR47959">
    <property type="entry name" value="ATP-DEPENDENT RNA HELICASE RHLE-RELATED"/>
    <property type="match status" value="1"/>
</dbReference>
<dbReference type="Pfam" id="PF00270">
    <property type="entry name" value="DEAD"/>
    <property type="match status" value="1"/>
</dbReference>
<dbReference type="Pfam" id="PF00271">
    <property type="entry name" value="Helicase_C"/>
    <property type="match status" value="1"/>
</dbReference>
<dbReference type="SMART" id="SM00487">
    <property type="entry name" value="DEXDc"/>
    <property type="match status" value="1"/>
</dbReference>
<dbReference type="SMART" id="SM00490">
    <property type="entry name" value="HELICc"/>
    <property type="match status" value="1"/>
</dbReference>
<dbReference type="SUPFAM" id="SSF52540">
    <property type="entry name" value="P-loop containing nucleoside triphosphate hydrolases"/>
    <property type="match status" value="1"/>
</dbReference>
<dbReference type="PROSITE" id="PS00039">
    <property type="entry name" value="DEAD_ATP_HELICASE"/>
    <property type="match status" value="1"/>
</dbReference>
<dbReference type="PROSITE" id="PS51192">
    <property type="entry name" value="HELICASE_ATP_BIND_1"/>
    <property type="match status" value="1"/>
</dbReference>
<dbReference type="PROSITE" id="PS51194">
    <property type="entry name" value="HELICASE_CTER"/>
    <property type="match status" value="1"/>
</dbReference>
<dbReference type="PROSITE" id="PS51195">
    <property type="entry name" value="Q_MOTIF"/>
    <property type="match status" value="1"/>
</dbReference>
<comment type="function">
    <text evidence="1">DEAD-box RNA helicase involved in RNA degradation. Has RNA-dependent ATPase activity and unwinds double-stranded RNA.</text>
</comment>
<comment type="catalytic activity">
    <reaction evidence="1">
        <text>ATP + H2O = ADP + phosphate + H(+)</text>
        <dbReference type="Rhea" id="RHEA:13065"/>
        <dbReference type="ChEBI" id="CHEBI:15377"/>
        <dbReference type="ChEBI" id="CHEBI:15378"/>
        <dbReference type="ChEBI" id="CHEBI:30616"/>
        <dbReference type="ChEBI" id="CHEBI:43474"/>
        <dbReference type="ChEBI" id="CHEBI:456216"/>
        <dbReference type="EC" id="3.6.4.13"/>
    </reaction>
</comment>
<comment type="subunit">
    <text evidence="1">Component of the RNA degradosome, which is a multiprotein complex involved in RNA processing and mRNA degradation.</text>
</comment>
<comment type="subcellular location">
    <subcellularLocation>
        <location evidence="1">Cytoplasm</location>
    </subcellularLocation>
</comment>
<comment type="similarity">
    <text evidence="1">Belongs to the DEAD box helicase family. RhlB subfamily.</text>
</comment>
<name>RHLB_SHEB8</name>
<keyword id="KW-0067">ATP-binding</keyword>
<keyword id="KW-0963">Cytoplasm</keyword>
<keyword id="KW-0347">Helicase</keyword>
<keyword id="KW-0378">Hydrolase</keyword>
<keyword id="KW-0547">Nucleotide-binding</keyword>
<keyword id="KW-0694">RNA-binding</keyword>
<proteinExistence type="inferred from homology"/>
<accession>A6WTD3</accession>
<reference key="1">
    <citation type="submission" date="2007-07" db="EMBL/GenBank/DDBJ databases">
        <title>Complete sequence of chromosome of Shewanella baltica OS185.</title>
        <authorList>
            <consortium name="US DOE Joint Genome Institute"/>
            <person name="Copeland A."/>
            <person name="Lucas S."/>
            <person name="Lapidus A."/>
            <person name="Barry K."/>
            <person name="Glavina del Rio T."/>
            <person name="Dalin E."/>
            <person name="Tice H."/>
            <person name="Pitluck S."/>
            <person name="Sims D."/>
            <person name="Brettin T."/>
            <person name="Bruce D."/>
            <person name="Detter J.C."/>
            <person name="Han C."/>
            <person name="Schmutz J."/>
            <person name="Larimer F."/>
            <person name="Land M."/>
            <person name="Hauser L."/>
            <person name="Kyrpides N."/>
            <person name="Mikhailova N."/>
            <person name="Brettar I."/>
            <person name="Rodrigues J."/>
            <person name="Konstantinidis K."/>
            <person name="Tiedje J."/>
            <person name="Richardson P."/>
        </authorList>
    </citation>
    <scope>NUCLEOTIDE SEQUENCE [LARGE SCALE GENOMIC DNA]</scope>
    <source>
        <strain>OS185</strain>
    </source>
</reference>
<evidence type="ECO:0000255" key="1">
    <source>
        <dbReference type="HAMAP-Rule" id="MF_00661"/>
    </source>
</evidence>
<evidence type="ECO:0000256" key="2">
    <source>
        <dbReference type="SAM" id="MobiDB-lite"/>
    </source>
</evidence>
<sequence>MSETHLSTQRFADLPLHPEVKQALAENGFEFCTPIQALSLPVLLQSKDIAGQAQTGTGKTMAFLVATFNHLLSTPVPEGRLINQPRAIIMAPTRELAIQIAKDAILLAKHTHLKVGIVYGGESYDVQRKVLDQGVDILIGTTGRIIDYVRQGIIGLNSIQAVVLDEADRMFDLGFIKDIRFLFRRMPEANQRLNMLFSATLSMKVQELAYDHMNEPVKVEIAPEEKTSKNIKEEIFYPSQEEKMRLLLTLIEEDWPEKAIVFSNTKHSCETLWSWLEGDGHRVGLLTGDVPQKKRIRILEQFTSGQLDILVATDVAARGLHISDVSHVYNYDLPDDCEDYVHRIGRTGRAGNKGMSISFACEEYALNLPAIESYINHSIPVSNYDSEALLADIPTPAKIHRKHPSGTRNLRDRSGASRPGAQRSGARPPRHDRTRRHS</sequence>
<gene>
    <name evidence="1" type="primary">rhlB</name>
    <name type="ordered locus">Shew185_3951</name>
</gene>
<organism>
    <name type="scientific">Shewanella baltica (strain OS185)</name>
    <dbReference type="NCBI Taxonomy" id="402882"/>
    <lineage>
        <taxon>Bacteria</taxon>
        <taxon>Pseudomonadati</taxon>
        <taxon>Pseudomonadota</taxon>
        <taxon>Gammaproteobacteria</taxon>
        <taxon>Alteromonadales</taxon>
        <taxon>Shewanellaceae</taxon>
        <taxon>Shewanella</taxon>
    </lineage>
</organism>
<protein>
    <recommendedName>
        <fullName evidence="1">ATP-dependent RNA helicase RhlB</fullName>
        <ecNumber evidence="1">3.6.4.13</ecNumber>
    </recommendedName>
</protein>
<feature type="chain" id="PRO_1000082858" description="ATP-dependent RNA helicase RhlB">
    <location>
        <begin position="1"/>
        <end position="438"/>
    </location>
</feature>
<feature type="domain" description="Helicase ATP-binding" evidence="1">
    <location>
        <begin position="40"/>
        <end position="219"/>
    </location>
</feature>
<feature type="domain" description="Helicase C-terminal" evidence="1">
    <location>
        <begin position="243"/>
        <end position="390"/>
    </location>
</feature>
<feature type="region of interest" description="Disordered" evidence="2">
    <location>
        <begin position="395"/>
        <end position="438"/>
    </location>
</feature>
<feature type="short sequence motif" description="Q motif">
    <location>
        <begin position="9"/>
        <end position="37"/>
    </location>
</feature>
<feature type="short sequence motif" description="DEAD box">
    <location>
        <begin position="165"/>
        <end position="168"/>
    </location>
</feature>
<feature type="compositionally biased region" description="Basic residues" evidence="2">
    <location>
        <begin position="428"/>
        <end position="438"/>
    </location>
</feature>
<feature type="binding site" evidence="1">
    <location>
        <begin position="53"/>
        <end position="60"/>
    </location>
    <ligand>
        <name>ATP</name>
        <dbReference type="ChEBI" id="CHEBI:30616"/>
    </ligand>
</feature>